<accession>Q8BKN6</accession>
<evidence type="ECO:0000250" key="1">
    <source>
        <dbReference type="UniProtKB" id="Q9Y663"/>
    </source>
</evidence>
<evidence type="ECO:0000255" key="2"/>
<evidence type="ECO:0000256" key="3">
    <source>
        <dbReference type="SAM" id="MobiDB-lite"/>
    </source>
</evidence>
<evidence type="ECO:0000305" key="4"/>
<protein>
    <recommendedName>
        <fullName>Heparan sulfate glucosamine 3-O-sulfotransferase 3A1</fullName>
        <ecNumber evidence="1">2.8.2.23</ecNumber>
    </recommendedName>
    <alternativeName>
        <fullName>Heparan sulfate D-glucosaminyl 3-O-sulfotransferase 3A1</fullName>
        <shortName>Heparan sulfate 3-O-sulfotransferase 3A1</shortName>
    </alternativeName>
</protein>
<sequence length="393" mass="43483">MAPSGPTGAQPSPAEPLSRSIFRKFLLMLCSLLTSLYVFYCLAERCPPGSGPVAGVPGRGVPAGPRELAMWPAGAPRKRLLQLRQRRRRGRSGPGDSSDQEEQSPGLAAAPGGSGAGSSVAEAQPGTLALLLDEGSKQLPQAIIIGVKKGGTRALLEFLRVHPDVRAVGAEPHFFDRSYHKGLAWYRDLMPRTLEGQITMEKTPSYFVTREAPARISAMSKDTKLIVVVRDPVTRAISDYTQTLSKRPDIPSFESLTFRNRSAGLIDTSWSAIQIGLYAKHLEPWLRHFPLGQMLFVSGERLVSDPAGELRRVQDFLGLKRIITDKHFYFNQTKGFPCLKKAEGSGKPHCLGKTKGRAHPTIAREVLRQLRDFYRPFNRKFYQMTGRDFGWDG</sequence>
<name>HS3SA_MOUSE</name>
<feature type="chain" id="PRO_0000085218" description="Heparan sulfate glucosamine 3-O-sulfotransferase 3A1">
    <location>
        <begin position="1"/>
        <end position="393"/>
    </location>
</feature>
<feature type="topological domain" description="Cytoplasmic" evidence="2">
    <location>
        <begin position="1"/>
        <end position="24"/>
    </location>
</feature>
<feature type="transmembrane region" description="Helical; Signal-anchor for type II membrane protein" evidence="2">
    <location>
        <begin position="25"/>
        <end position="43"/>
    </location>
</feature>
<feature type="topological domain" description="Lumenal" evidence="2">
    <location>
        <begin position="44"/>
        <end position="393"/>
    </location>
</feature>
<feature type="region of interest" description="Disordered" evidence="3">
    <location>
        <begin position="85"/>
        <end position="121"/>
    </location>
</feature>
<feature type="binding site" evidence="1">
    <location>
        <begin position="149"/>
        <end position="153"/>
    </location>
    <ligand>
        <name>3'-phosphoadenylyl sulfate</name>
        <dbReference type="ChEBI" id="CHEBI:58339"/>
    </ligand>
</feature>
<feature type="binding site" evidence="1">
    <location>
        <begin position="171"/>
        <end position="177"/>
    </location>
    <ligand>
        <name>substrate</name>
    </ligand>
</feature>
<feature type="binding site" evidence="1">
    <location>
        <begin position="202"/>
        <end position="205"/>
    </location>
    <ligand>
        <name>substrate</name>
    </ligand>
</feature>
<feature type="binding site" evidence="1">
    <location>
        <position position="230"/>
    </location>
    <ligand>
        <name>3'-phosphoadenylyl sulfate</name>
        <dbReference type="ChEBI" id="CHEBI:58339"/>
    </ligand>
</feature>
<feature type="binding site" evidence="1">
    <location>
        <position position="238"/>
    </location>
    <ligand>
        <name>3'-phosphoadenylyl sulfate</name>
        <dbReference type="ChEBI" id="CHEBI:58339"/>
    </ligand>
</feature>
<feature type="binding site" evidence="1">
    <location>
        <begin position="270"/>
        <end position="271"/>
    </location>
    <ligand>
        <name>substrate</name>
    </ligand>
</feature>
<feature type="binding site" evidence="1">
    <location>
        <begin position="355"/>
        <end position="359"/>
    </location>
    <ligand>
        <name>3'-phosphoadenylyl sulfate</name>
        <dbReference type="ChEBI" id="CHEBI:58339"/>
    </ligand>
</feature>
<feature type="glycosylation site" description="N-linked (GlcNAc...) asparagine" evidence="2">
    <location>
        <position position="260"/>
    </location>
</feature>
<feature type="glycosylation site" description="N-linked (GlcNAc...) asparagine" evidence="2">
    <location>
        <position position="331"/>
    </location>
</feature>
<feature type="disulfide bond" evidence="1">
    <location>
        <begin position="338"/>
        <end position="350"/>
    </location>
</feature>
<keyword id="KW-1015">Disulfide bond</keyword>
<keyword id="KW-0325">Glycoprotein</keyword>
<keyword id="KW-0333">Golgi apparatus</keyword>
<keyword id="KW-0472">Membrane</keyword>
<keyword id="KW-1185">Reference proteome</keyword>
<keyword id="KW-0735">Signal-anchor</keyword>
<keyword id="KW-0808">Transferase</keyword>
<keyword id="KW-0812">Transmembrane</keyword>
<keyword id="KW-1133">Transmembrane helix</keyword>
<gene>
    <name type="primary">Hs3st3a1</name>
    <name type="synonym">3ost3a1</name>
    <name type="synonym">Hs3st3a</name>
</gene>
<organism>
    <name type="scientific">Mus musculus</name>
    <name type="common">Mouse</name>
    <dbReference type="NCBI Taxonomy" id="10090"/>
    <lineage>
        <taxon>Eukaryota</taxon>
        <taxon>Metazoa</taxon>
        <taxon>Chordata</taxon>
        <taxon>Craniata</taxon>
        <taxon>Vertebrata</taxon>
        <taxon>Euteleostomi</taxon>
        <taxon>Mammalia</taxon>
        <taxon>Eutheria</taxon>
        <taxon>Euarchontoglires</taxon>
        <taxon>Glires</taxon>
        <taxon>Rodentia</taxon>
        <taxon>Myomorpha</taxon>
        <taxon>Muroidea</taxon>
        <taxon>Muridae</taxon>
        <taxon>Murinae</taxon>
        <taxon>Mus</taxon>
        <taxon>Mus</taxon>
    </lineage>
</organism>
<comment type="function">
    <text evidence="1">Sulfotransferase that utilizes 3'-phospho-5'-adenylyl sulfate (PAPS) to catalyze the transfer of a sulfo group to an N-unsubstituted glucosamine linked to a 2-O-sulfo iduronic acid unit on heparan sulfate. Catalyzes the O-sulfation of glucosamine in IdoUA2S-GlcNS and also in IdoUA2S-GlcNH2. Unlike HS3ST1/3-OST-1, does not convert non-anticoagulant heparan sulfate to anticoagulant heparan sulfate (By similarity).</text>
</comment>
<comment type="catalytic activity">
    <reaction evidence="1">
        <text>alpha-D-glucosaminyl-[heparan sulfate](n) + 3'-phosphoadenylyl sulfate = 3-sulfo-alpha-D-glucosaminyl-[heparan sulfate](n) + adenosine 3',5'-bisphosphate + H(+)</text>
        <dbReference type="Rhea" id="RHEA:15461"/>
        <dbReference type="Rhea" id="RHEA-COMP:9830"/>
        <dbReference type="Rhea" id="RHEA-COMP:9831"/>
        <dbReference type="ChEBI" id="CHEBI:15378"/>
        <dbReference type="ChEBI" id="CHEBI:58339"/>
        <dbReference type="ChEBI" id="CHEBI:58343"/>
        <dbReference type="ChEBI" id="CHEBI:58388"/>
        <dbReference type="ChEBI" id="CHEBI:70975"/>
        <dbReference type="EC" id="2.8.2.23"/>
    </reaction>
</comment>
<comment type="subcellular location">
    <subcellularLocation>
        <location evidence="4">Golgi apparatus membrane</location>
        <topology evidence="4">Single-pass type II membrane protein</topology>
    </subcellularLocation>
</comment>
<comment type="similarity">
    <text evidence="4">Belongs to the sulfotransferase 1 family.</text>
</comment>
<proteinExistence type="evidence at transcript level"/>
<dbReference type="EC" id="2.8.2.23" evidence="1"/>
<dbReference type="EMBL" id="AK051284">
    <property type="protein sequence ID" value="BAC34592.1"/>
    <property type="molecule type" value="mRNA"/>
</dbReference>
<dbReference type="EMBL" id="AL646051">
    <property type="status" value="NOT_ANNOTATED_CDS"/>
    <property type="molecule type" value="Genomic_DNA"/>
</dbReference>
<dbReference type="EMBL" id="AL672141">
    <property type="status" value="NOT_ANNOTATED_CDS"/>
    <property type="molecule type" value="Genomic_DNA"/>
</dbReference>
<dbReference type="CCDS" id="CCDS24840.1"/>
<dbReference type="RefSeq" id="NP_849201.1">
    <property type="nucleotide sequence ID" value="NM_178870.5"/>
</dbReference>
<dbReference type="SMR" id="Q8BKN6"/>
<dbReference type="FunCoup" id="Q8BKN6">
    <property type="interactions" value="28"/>
</dbReference>
<dbReference type="STRING" id="10090.ENSMUSP00000055930"/>
<dbReference type="GlyCosmos" id="Q8BKN6">
    <property type="glycosylation" value="2 sites, No reported glycans"/>
</dbReference>
<dbReference type="GlyGen" id="Q8BKN6">
    <property type="glycosylation" value="3 sites"/>
</dbReference>
<dbReference type="iPTMnet" id="Q8BKN6"/>
<dbReference type="PhosphoSitePlus" id="Q8BKN6"/>
<dbReference type="PaxDb" id="10090-ENSMUSP00000055930"/>
<dbReference type="ProteomicsDB" id="267165"/>
<dbReference type="Antibodypedia" id="25095">
    <property type="antibodies" value="40 antibodies from 12 providers"/>
</dbReference>
<dbReference type="DNASU" id="15478"/>
<dbReference type="Ensembl" id="ENSMUST00000058652.6">
    <property type="protein sequence ID" value="ENSMUSP00000055930.6"/>
    <property type="gene ID" value="ENSMUSG00000047759.7"/>
</dbReference>
<dbReference type="GeneID" id="15478"/>
<dbReference type="KEGG" id="mmu:15478"/>
<dbReference type="UCSC" id="uc007jkr.1">
    <property type="organism name" value="mouse"/>
</dbReference>
<dbReference type="AGR" id="MGI:1333861"/>
<dbReference type="CTD" id="9955"/>
<dbReference type="MGI" id="MGI:1333861">
    <property type="gene designation" value="Hs3st3a1"/>
</dbReference>
<dbReference type="VEuPathDB" id="HostDB:ENSMUSG00000047759"/>
<dbReference type="eggNOG" id="KOG3704">
    <property type="taxonomic scope" value="Eukaryota"/>
</dbReference>
<dbReference type="GeneTree" id="ENSGT00940000162249"/>
<dbReference type="HOGENOM" id="CLU_017703_0_1_1"/>
<dbReference type="InParanoid" id="Q8BKN6"/>
<dbReference type="OMA" id="MFVMSIW"/>
<dbReference type="OrthoDB" id="411451at2759"/>
<dbReference type="PhylomeDB" id="Q8BKN6"/>
<dbReference type="TreeFam" id="TF350755"/>
<dbReference type="Reactome" id="R-MMU-2022928">
    <property type="pathway name" value="HS-GAG biosynthesis"/>
</dbReference>
<dbReference type="BioGRID-ORCS" id="15478">
    <property type="hits" value="1 hit in 78 CRISPR screens"/>
</dbReference>
<dbReference type="ChiTaRS" id="Hs3st3a1">
    <property type="organism name" value="mouse"/>
</dbReference>
<dbReference type="PRO" id="PR:Q8BKN6"/>
<dbReference type="Proteomes" id="UP000000589">
    <property type="component" value="Chromosome 11"/>
</dbReference>
<dbReference type="RNAct" id="Q8BKN6">
    <property type="molecule type" value="protein"/>
</dbReference>
<dbReference type="Bgee" id="ENSMUSG00000047759">
    <property type="expression patterns" value="Expressed in mesenchyme of handplate and 130 other cell types or tissues"/>
</dbReference>
<dbReference type="ExpressionAtlas" id="Q8BKN6">
    <property type="expression patterns" value="baseline and differential"/>
</dbReference>
<dbReference type="GO" id="GO:0000139">
    <property type="term" value="C:Golgi membrane"/>
    <property type="evidence" value="ECO:0007669"/>
    <property type="project" value="UniProtKB-SubCell"/>
</dbReference>
<dbReference type="GO" id="GO:0008467">
    <property type="term" value="F:[heparan sulfate]-glucosamine 3-sulfotransferase activity"/>
    <property type="evidence" value="ECO:0000250"/>
    <property type="project" value="UniProtKB"/>
</dbReference>
<dbReference type="GO" id="GO:0001658">
    <property type="term" value="P:branching involved in ureteric bud morphogenesis"/>
    <property type="evidence" value="ECO:0000316"/>
    <property type="project" value="MGI"/>
</dbReference>
<dbReference type="GO" id="GO:0006024">
    <property type="term" value="P:glycosaminoglycan biosynthetic process"/>
    <property type="evidence" value="ECO:0000250"/>
    <property type="project" value="UniProtKB"/>
</dbReference>
<dbReference type="GO" id="GO:0015012">
    <property type="term" value="P:heparan sulfate proteoglycan biosynthetic process"/>
    <property type="evidence" value="ECO:0000315"/>
    <property type="project" value="MGI"/>
</dbReference>
<dbReference type="FunFam" id="3.40.50.300:FF:000194">
    <property type="entry name" value="Sulfotransferase"/>
    <property type="match status" value="1"/>
</dbReference>
<dbReference type="Gene3D" id="3.40.50.300">
    <property type="entry name" value="P-loop containing nucleotide triphosphate hydrolases"/>
    <property type="match status" value="1"/>
</dbReference>
<dbReference type="InterPro" id="IPR037359">
    <property type="entry name" value="NST/OST"/>
</dbReference>
<dbReference type="InterPro" id="IPR027417">
    <property type="entry name" value="P-loop_NTPase"/>
</dbReference>
<dbReference type="InterPro" id="IPR000863">
    <property type="entry name" value="Sulfotransferase_dom"/>
</dbReference>
<dbReference type="PANTHER" id="PTHR10605:SF64">
    <property type="entry name" value="HEPARAN SULFATE GLUCOSAMINE 3-O-SULFOTRANSFERASE 3A1"/>
    <property type="match status" value="1"/>
</dbReference>
<dbReference type="PANTHER" id="PTHR10605">
    <property type="entry name" value="HEPARAN SULFATE SULFOTRANSFERASE"/>
    <property type="match status" value="1"/>
</dbReference>
<dbReference type="Pfam" id="PF00685">
    <property type="entry name" value="Sulfotransfer_1"/>
    <property type="match status" value="1"/>
</dbReference>
<dbReference type="SUPFAM" id="SSF52540">
    <property type="entry name" value="P-loop containing nucleoside triphosphate hydrolases"/>
    <property type="match status" value="1"/>
</dbReference>
<reference key="1">
    <citation type="journal article" date="2005" name="Science">
        <title>The transcriptional landscape of the mammalian genome.</title>
        <authorList>
            <person name="Carninci P."/>
            <person name="Kasukawa T."/>
            <person name="Katayama S."/>
            <person name="Gough J."/>
            <person name="Frith M.C."/>
            <person name="Maeda N."/>
            <person name="Oyama R."/>
            <person name="Ravasi T."/>
            <person name="Lenhard B."/>
            <person name="Wells C."/>
            <person name="Kodzius R."/>
            <person name="Shimokawa K."/>
            <person name="Bajic V.B."/>
            <person name="Brenner S.E."/>
            <person name="Batalov S."/>
            <person name="Forrest A.R."/>
            <person name="Zavolan M."/>
            <person name="Davis M.J."/>
            <person name="Wilming L.G."/>
            <person name="Aidinis V."/>
            <person name="Allen J.E."/>
            <person name="Ambesi-Impiombato A."/>
            <person name="Apweiler R."/>
            <person name="Aturaliya R.N."/>
            <person name="Bailey T.L."/>
            <person name="Bansal M."/>
            <person name="Baxter L."/>
            <person name="Beisel K.W."/>
            <person name="Bersano T."/>
            <person name="Bono H."/>
            <person name="Chalk A.M."/>
            <person name="Chiu K.P."/>
            <person name="Choudhary V."/>
            <person name="Christoffels A."/>
            <person name="Clutterbuck D.R."/>
            <person name="Crowe M.L."/>
            <person name="Dalla E."/>
            <person name="Dalrymple B.P."/>
            <person name="de Bono B."/>
            <person name="Della Gatta G."/>
            <person name="di Bernardo D."/>
            <person name="Down T."/>
            <person name="Engstrom P."/>
            <person name="Fagiolini M."/>
            <person name="Faulkner G."/>
            <person name="Fletcher C.F."/>
            <person name="Fukushima T."/>
            <person name="Furuno M."/>
            <person name="Futaki S."/>
            <person name="Gariboldi M."/>
            <person name="Georgii-Hemming P."/>
            <person name="Gingeras T.R."/>
            <person name="Gojobori T."/>
            <person name="Green R.E."/>
            <person name="Gustincich S."/>
            <person name="Harbers M."/>
            <person name="Hayashi Y."/>
            <person name="Hensch T.K."/>
            <person name="Hirokawa N."/>
            <person name="Hill D."/>
            <person name="Huminiecki L."/>
            <person name="Iacono M."/>
            <person name="Ikeo K."/>
            <person name="Iwama A."/>
            <person name="Ishikawa T."/>
            <person name="Jakt M."/>
            <person name="Kanapin A."/>
            <person name="Katoh M."/>
            <person name="Kawasawa Y."/>
            <person name="Kelso J."/>
            <person name="Kitamura H."/>
            <person name="Kitano H."/>
            <person name="Kollias G."/>
            <person name="Krishnan S.P."/>
            <person name="Kruger A."/>
            <person name="Kummerfeld S.K."/>
            <person name="Kurochkin I.V."/>
            <person name="Lareau L.F."/>
            <person name="Lazarevic D."/>
            <person name="Lipovich L."/>
            <person name="Liu J."/>
            <person name="Liuni S."/>
            <person name="McWilliam S."/>
            <person name="Madan Babu M."/>
            <person name="Madera M."/>
            <person name="Marchionni L."/>
            <person name="Matsuda H."/>
            <person name="Matsuzawa S."/>
            <person name="Miki H."/>
            <person name="Mignone F."/>
            <person name="Miyake S."/>
            <person name="Morris K."/>
            <person name="Mottagui-Tabar S."/>
            <person name="Mulder N."/>
            <person name="Nakano N."/>
            <person name="Nakauchi H."/>
            <person name="Ng P."/>
            <person name="Nilsson R."/>
            <person name="Nishiguchi S."/>
            <person name="Nishikawa S."/>
            <person name="Nori F."/>
            <person name="Ohara O."/>
            <person name="Okazaki Y."/>
            <person name="Orlando V."/>
            <person name="Pang K.C."/>
            <person name="Pavan W.J."/>
            <person name="Pavesi G."/>
            <person name="Pesole G."/>
            <person name="Petrovsky N."/>
            <person name="Piazza S."/>
            <person name="Reed J."/>
            <person name="Reid J.F."/>
            <person name="Ring B.Z."/>
            <person name="Ringwald M."/>
            <person name="Rost B."/>
            <person name="Ruan Y."/>
            <person name="Salzberg S.L."/>
            <person name="Sandelin A."/>
            <person name="Schneider C."/>
            <person name="Schoenbach C."/>
            <person name="Sekiguchi K."/>
            <person name="Semple C.A."/>
            <person name="Seno S."/>
            <person name="Sessa L."/>
            <person name="Sheng Y."/>
            <person name="Shibata Y."/>
            <person name="Shimada H."/>
            <person name="Shimada K."/>
            <person name="Silva D."/>
            <person name="Sinclair B."/>
            <person name="Sperling S."/>
            <person name="Stupka E."/>
            <person name="Sugiura K."/>
            <person name="Sultana R."/>
            <person name="Takenaka Y."/>
            <person name="Taki K."/>
            <person name="Tammoja K."/>
            <person name="Tan S.L."/>
            <person name="Tang S."/>
            <person name="Taylor M.S."/>
            <person name="Tegner J."/>
            <person name="Teichmann S.A."/>
            <person name="Ueda H.R."/>
            <person name="van Nimwegen E."/>
            <person name="Verardo R."/>
            <person name="Wei C.L."/>
            <person name="Yagi K."/>
            <person name="Yamanishi H."/>
            <person name="Zabarovsky E."/>
            <person name="Zhu S."/>
            <person name="Zimmer A."/>
            <person name="Hide W."/>
            <person name="Bult C."/>
            <person name="Grimmond S.M."/>
            <person name="Teasdale R.D."/>
            <person name="Liu E.T."/>
            <person name="Brusic V."/>
            <person name="Quackenbush J."/>
            <person name="Wahlestedt C."/>
            <person name="Mattick J.S."/>
            <person name="Hume D.A."/>
            <person name="Kai C."/>
            <person name="Sasaki D."/>
            <person name="Tomaru Y."/>
            <person name="Fukuda S."/>
            <person name="Kanamori-Katayama M."/>
            <person name="Suzuki M."/>
            <person name="Aoki J."/>
            <person name="Arakawa T."/>
            <person name="Iida J."/>
            <person name="Imamura K."/>
            <person name="Itoh M."/>
            <person name="Kato T."/>
            <person name="Kawaji H."/>
            <person name="Kawagashira N."/>
            <person name="Kawashima T."/>
            <person name="Kojima M."/>
            <person name="Kondo S."/>
            <person name="Konno H."/>
            <person name="Nakano K."/>
            <person name="Ninomiya N."/>
            <person name="Nishio T."/>
            <person name="Okada M."/>
            <person name="Plessy C."/>
            <person name="Shibata K."/>
            <person name="Shiraki T."/>
            <person name="Suzuki S."/>
            <person name="Tagami M."/>
            <person name="Waki K."/>
            <person name="Watahiki A."/>
            <person name="Okamura-Oho Y."/>
            <person name="Suzuki H."/>
            <person name="Kawai J."/>
            <person name="Hayashizaki Y."/>
        </authorList>
    </citation>
    <scope>NUCLEOTIDE SEQUENCE [LARGE SCALE MRNA]</scope>
    <source>
        <strain>C57BL/6J</strain>
        <tissue>Spinal ganglion</tissue>
    </source>
</reference>
<reference key="2">
    <citation type="journal article" date="2009" name="PLoS Biol.">
        <title>Lineage-specific biology revealed by a finished genome assembly of the mouse.</title>
        <authorList>
            <person name="Church D.M."/>
            <person name="Goodstadt L."/>
            <person name="Hillier L.W."/>
            <person name="Zody M.C."/>
            <person name="Goldstein S."/>
            <person name="She X."/>
            <person name="Bult C.J."/>
            <person name="Agarwala R."/>
            <person name="Cherry J.L."/>
            <person name="DiCuccio M."/>
            <person name="Hlavina W."/>
            <person name="Kapustin Y."/>
            <person name="Meric P."/>
            <person name="Maglott D."/>
            <person name="Birtle Z."/>
            <person name="Marques A.C."/>
            <person name="Graves T."/>
            <person name="Zhou S."/>
            <person name="Teague B."/>
            <person name="Potamousis K."/>
            <person name="Churas C."/>
            <person name="Place M."/>
            <person name="Herschleb J."/>
            <person name="Runnheim R."/>
            <person name="Forrest D."/>
            <person name="Amos-Landgraf J."/>
            <person name="Schwartz D.C."/>
            <person name="Cheng Z."/>
            <person name="Lindblad-Toh K."/>
            <person name="Eichler E.E."/>
            <person name="Ponting C.P."/>
        </authorList>
    </citation>
    <scope>NUCLEOTIDE SEQUENCE [LARGE SCALE GENOMIC DNA]</scope>
    <source>
        <strain>C57BL/6J</strain>
    </source>
</reference>